<reference evidence="7" key="1">
    <citation type="journal article" date="1992" name="Insect Biochem. Mol. Biol.">
        <title>Nucleotide sequence and structure of the arylphorin gene from Galleria mellonella.</title>
        <authorList>
            <person name="Memmel N.A."/>
            <person name="Trewitt P.M."/>
            <person name="Silhacek D.E."/>
            <person name="Kumaran A.K."/>
        </authorList>
    </citation>
    <scope>NUCLEOTIDE SEQUENCE [GENOMIC DNA]</scope>
    <scope>SUBCELLULAR LOCATION</scope>
    <scope>DEVELOPMENTAL STAGE</scope>
</reference>
<reference evidence="6" key="2">
    <citation type="journal article" date="2021" name="Molecules">
        <title>Fungal alpha-1,3-Glucan as a New Pathogen-Associated Molecular Pattern in the Insect Model Host Galleria mellonella.</title>
        <authorList>
            <person name="Staczek S."/>
            <person name="Zdybicka-Barabas A."/>
            <person name="Wojda I."/>
            <person name="Wiater A."/>
            <person name="Mak P."/>
            <person name="Suder P."/>
            <person name="Skrzypiec K."/>
            <person name="Cytrynska M."/>
        </authorList>
    </citation>
    <scope>IDENTIFICATION BY MASS SPECTROMETRY</scope>
    <scope>FUNCTION</scope>
    <scope>SUBCELLULAR LOCATION</scope>
    <scope>TISSUE SPECIFICITY</scope>
</reference>
<feature type="signal peptide" evidence="1">
    <location>
        <begin position="1"/>
        <end position="16"/>
    </location>
</feature>
<feature type="chain" id="PRO_5029440263" description="Arylphorin" evidence="1">
    <location>
        <begin position="17"/>
        <end position="702"/>
    </location>
</feature>
<feature type="glycosylation site" description="N-linked (GlcNAc...) asparagine" evidence="2">
    <location>
        <position position="211"/>
    </location>
</feature>
<feature type="glycosylation site" description="N-linked (GlcNAc...) asparagine" evidence="2">
    <location>
        <position position="481"/>
    </location>
</feature>
<feature type="strand" evidence="10">
    <location>
        <begin position="27"/>
        <end position="29"/>
    </location>
</feature>
<feature type="helix" evidence="10">
    <location>
        <begin position="32"/>
        <end position="34"/>
    </location>
</feature>
<feature type="helix" evidence="10">
    <location>
        <begin position="35"/>
        <end position="45"/>
    </location>
</feature>
<feature type="turn" evidence="10">
    <location>
        <begin position="46"/>
        <end position="49"/>
    </location>
</feature>
<feature type="helix" evidence="10">
    <location>
        <begin position="57"/>
        <end position="63"/>
    </location>
</feature>
<feature type="helix" evidence="10">
    <location>
        <begin position="67"/>
        <end position="72"/>
    </location>
</feature>
<feature type="helix" evidence="10">
    <location>
        <begin position="76"/>
        <end position="88"/>
    </location>
</feature>
<feature type="strand" evidence="10">
    <location>
        <begin position="93"/>
        <end position="95"/>
    </location>
</feature>
<feature type="helix" evidence="10">
    <location>
        <begin position="102"/>
        <end position="117"/>
    </location>
</feature>
<feature type="strand" evidence="10">
    <location>
        <begin position="118"/>
        <end position="120"/>
    </location>
</feature>
<feature type="helix" evidence="10">
    <location>
        <begin position="121"/>
        <end position="134"/>
    </location>
</feature>
<feature type="helix" evidence="10">
    <location>
        <begin position="137"/>
        <end position="150"/>
    </location>
</feature>
<feature type="helix" evidence="10">
    <location>
        <begin position="152"/>
        <end position="154"/>
    </location>
</feature>
<feature type="helix" evidence="10">
    <location>
        <begin position="162"/>
        <end position="165"/>
    </location>
</feature>
<feature type="helix" evidence="10">
    <location>
        <begin position="167"/>
        <end position="169"/>
    </location>
</feature>
<feature type="helix" evidence="10">
    <location>
        <begin position="173"/>
        <end position="185"/>
    </location>
</feature>
<feature type="helix" evidence="10">
    <location>
        <begin position="191"/>
        <end position="197"/>
    </location>
</feature>
<feature type="strand" evidence="10">
    <location>
        <begin position="199"/>
        <end position="202"/>
    </location>
</feature>
<feature type="strand" evidence="10">
    <location>
        <begin position="205"/>
        <end position="209"/>
    </location>
</feature>
<feature type="turn" evidence="10">
    <location>
        <begin position="215"/>
        <end position="217"/>
    </location>
</feature>
<feature type="helix" evidence="10">
    <location>
        <begin position="222"/>
        <end position="225"/>
    </location>
</feature>
<feature type="helix" evidence="10">
    <location>
        <begin position="226"/>
        <end position="229"/>
    </location>
</feature>
<feature type="helix" evidence="10">
    <location>
        <begin position="232"/>
        <end position="244"/>
    </location>
</feature>
<feature type="helix" evidence="10">
    <location>
        <begin position="251"/>
        <end position="255"/>
    </location>
</feature>
<feature type="helix" evidence="10">
    <location>
        <begin position="256"/>
        <end position="261"/>
    </location>
</feature>
<feature type="helix" evidence="10">
    <location>
        <begin position="262"/>
        <end position="283"/>
    </location>
</feature>
<feature type="strand" evidence="10">
    <location>
        <begin position="296"/>
        <end position="298"/>
    </location>
</feature>
<feature type="strand" evidence="10">
    <location>
        <begin position="309"/>
        <end position="312"/>
    </location>
</feature>
<feature type="helix" evidence="10">
    <location>
        <begin position="325"/>
        <end position="327"/>
    </location>
</feature>
<feature type="helix" evidence="10">
    <location>
        <begin position="328"/>
        <end position="347"/>
    </location>
</feature>
<feature type="strand" evidence="10">
    <location>
        <begin position="348"/>
        <end position="352"/>
    </location>
</feature>
<feature type="strand" evidence="10">
    <location>
        <begin position="355"/>
        <end position="358"/>
    </location>
</feature>
<feature type="helix" evidence="10">
    <location>
        <begin position="362"/>
        <end position="364"/>
    </location>
</feature>
<feature type="helix" evidence="10">
    <location>
        <begin position="365"/>
        <end position="373"/>
    </location>
</feature>
<feature type="helix" evidence="10">
    <location>
        <begin position="376"/>
        <end position="379"/>
    </location>
</feature>
<feature type="helix" evidence="10">
    <location>
        <begin position="391"/>
        <end position="400"/>
    </location>
</feature>
<feature type="helix" evidence="10">
    <location>
        <begin position="405"/>
        <end position="408"/>
    </location>
</feature>
<feature type="helix" evidence="10">
    <location>
        <begin position="417"/>
        <end position="419"/>
    </location>
</feature>
<feature type="turn" evidence="10">
    <location>
        <begin position="421"/>
        <end position="423"/>
    </location>
</feature>
<feature type="helix" evidence="10">
    <location>
        <begin position="424"/>
        <end position="426"/>
    </location>
</feature>
<feature type="helix" evidence="10">
    <location>
        <begin position="428"/>
        <end position="445"/>
    </location>
</feature>
<feature type="helix" evidence="10">
    <location>
        <begin position="453"/>
        <end position="456"/>
    </location>
</feature>
<feature type="strand" evidence="10">
    <location>
        <begin position="461"/>
        <end position="468"/>
    </location>
</feature>
<feature type="strand" evidence="10">
    <location>
        <begin position="471"/>
        <end position="481"/>
    </location>
</feature>
<feature type="helix" evidence="10">
    <location>
        <begin position="483"/>
        <end position="485"/>
    </location>
</feature>
<feature type="helix" evidence="10">
    <location>
        <begin position="490"/>
        <end position="494"/>
    </location>
</feature>
<feature type="strand" evidence="10">
    <location>
        <begin position="499"/>
        <end position="509"/>
    </location>
</feature>
<feature type="strand" evidence="10">
    <location>
        <begin position="513"/>
        <end position="522"/>
    </location>
</feature>
<feature type="strand" evidence="10">
    <location>
        <begin position="524"/>
        <end position="536"/>
    </location>
</feature>
<feature type="helix" evidence="10">
    <location>
        <begin position="545"/>
        <end position="548"/>
    </location>
</feature>
<feature type="helix" evidence="10">
    <location>
        <begin position="549"/>
        <end position="551"/>
    </location>
</feature>
<feature type="strand" evidence="10">
    <location>
        <begin position="553"/>
        <end position="562"/>
    </location>
</feature>
<feature type="strand" evidence="10">
    <location>
        <begin position="564"/>
        <end position="572"/>
    </location>
</feature>
<feature type="helix" evidence="10">
    <location>
        <begin position="573"/>
        <end position="575"/>
    </location>
</feature>
<feature type="helix" evidence="10">
    <location>
        <begin position="586"/>
        <end position="594"/>
    </location>
</feature>
<feature type="strand" evidence="10">
    <location>
        <begin position="597"/>
        <end position="599"/>
    </location>
</feature>
<feature type="helix" evidence="10">
    <location>
        <begin position="600"/>
        <end position="604"/>
    </location>
</feature>
<feature type="strand" evidence="10">
    <location>
        <begin position="608"/>
        <end position="610"/>
    </location>
</feature>
<feature type="helix" evidence="10">
    <location>
        <begin position="611"/>
        <end position="613"/>
    </location>
</feature>
<feature type="strand" evidence="10">
    <location>
        <begin position="623"/>
        <end position="633"/>
    </location>
</feature>
<feature type="helix" evidence="10">
    <location>
        <begin position="639"/>
        <end position="641"/>
    </location>
</feature>
<feature type="turn" evidence="10">
    <location>
        <begin position="643"/>
        <end position="647"/>
    </location>
</feature>
<feature type="strand" evidence="10">
    <location>
        <begin position="650"/>
        <end position="652"/>
    </location>
</feature>
<feature type="turn" evidence="10">
    <location>
        <begin position="654"/>
        <end position="657"/>
    </location>
</feature>
<feature type="strand" evidence="10">
    <location>
        <begin position="658"/>
        <end position="660"/>
    </location>
</feature>
<feature type="helix" evidence="10">
    <location>
        <begin position="665"/>
        <end position="668"/>
    </location>
</feature>
<feature type="strand" evidence="10">
    <location>
        <begin position="673"/>
        <end position="682"/>
    </location>
</feature>
<feature type="strand" evidence="9">
    <location>
        <begin position="686"/>
        <end position="688"/>
    </location>
</feature>
<accession>Q24995</accession>
<proteinExistence type="evidence at protein level"/>
<keyword id="KW-0002">3D-structure</keyword>
<keyword id="KW-0325">Glycoprotein</keyword>
<keyword id="KW-1185">Reference proteome</keyword>
<keyword id="KW-0964">Secreted</keyword>
<keyword id="KW-0732">Signal</keyword>
<keyword id="KW-0758">Storage protein</keyword>
<comment type="function">
    <text evidence="3 6">Larval storage protein (LSP) which may serve as a store of amino acids for synthesis of adult proteins (Probable). Binds the A.niger cell wall component alpha-1,3-glucan, a fungal pathogen-associated molecular pattern (PAMP) that activates the host immune response (PubMed:34443685).</text>
</comment>
<comment type="subcellular location">
    <subcellularLocation>
        <location evidence="3 4">Secreted</location>
    </subcellularLocation>
    <text evidence="3 4">Secreted in the hemolymph.</text>
</comment>
<comment type="tissue specificity">
    <text evidence="3">Hemolymph.</text>
</comment>
<comment type="developmental stage">
    <text evidence="4">In last instar larval fat body and hemolymph.</text>
</comment>
<comment type="similarity">
    <text evidence="6">Belongs to the hemocyanin family.</text>
</comment>
<name>ARY_GALME</name>
<dbReference type="EMBL" id="M73793">
    <property type="protein sequence ID" value="AAA74229.1"/>
    <property type="molecule type" value="Genomic_DNA"/>
</dbReference>
<dbReference type="PIR" id="A61619">
    <property type="entry name" value="A61619"/>
</dbReference>
<dbReference type="RefSeq" id="XP_026756460.1">
    <property type="nucleotide sequence ID" value="XM_026900659.2"/>
</dbReference>
<dbReference type="PDB" id="8CA9">
    <property type="method" value="EM"/>
    <property type="resolution" value="2.29 A"/>
    <property type="chains" value="A/B/C=1-702"/>
</dbReference>
<dbReference type="PDB" id="8PO9">
    <property type="method" value="X-ray"/>
    <property type="resolution" value="2.20 A"/>
    <property type="chains" value="A/B/C/D/E/F=1-702"/>
</dbReference>
<dbReference type="PDBsum" id="8CA9"/>
<dbReference type="PDBsum" id="8PO9"/>
<dbReference type="EMDB" id="EMD-16521"/>
<dbReference type="SMR" id="Q24995"/>
<dbReference type="FunCoup" id="Q24995">
    <property type="interactions" value="3"/>
</dbReference>
<dbReference type="GlyCosmos" id="Q24995">
    <property type="glycosylation" value="2 sites, No reported glycans"/>
</dbReference>
<dbReference type="EnsemblMetazoa" id="XM_026900659.1">
    <property type="protein sequence ID" value="XP_026756460.1"/>
    <property type="gene ID" value="LOC113516268"/>
</dbReference>
<dbReference type="GeneID" id="113516268"/>
<dbReference type="InParanoid" id="Q24995"/>
<dbReference type="OrthoDB" id="6371642at2759"/>
<dbReference type="Proteomes" id="UP000504614">
    <property type="component" value="Unplaced"/>
</dbReference>
<dbReference type="GO" id="GO:0005576">
    <property type="term" value="C:extracellular region"/>
    <property type="evidence" value="ECO:0007669"/>
    <property type="project" value="UniProtKB-SubCell"/>
</dbReference>
<dbReference type="GO" id="GO:0045735">
    <property type="term" value="F:nutrient reservoir activity"/>
    <property type="evidence" value="ECO:0007669"/>
    <property type="project" value="UniProtKB-KW"/>
</dbReference>
<dbReference type="Gene3D" id="1.10.1280.10">
    <property type="entry name" value="Di-copper center containing domain from catechol oxidase"/>
    <property type="match status" value="1"/>
</dbReference>
<dbReference type="Gene3D" id="2.60.40.1520">
    <property type="entry name" value="Hemocyanin, C-terminal domain"/>
    <property type="match status" value="1"/>
</dbReference>
<dbReference type="Gene3D" id="1.20.1370.10">
    <property type="entry name" value="Hemocyanin, N-terminal domain"/>
    <property type="match status" value="1"/>
</dbReference>
<dbReference type="InterPro" id="IPR008922">
    <property type="entry name" value="Di-copper_centre_dom_sf"/>
</dbReference>
<dbReference type="InterPro" id="IPR013788">
    <property type="entry name" value="Hemocyanin/hexamerin"/>
</dbReference>
<dbReference type="InterPro" id="IPR000896">
    <property type="entry name" value="Hemocyanin/hexamerin_mid_dom"/>
</dbReference>
<dbReference type="InterPro" id="IPR005203">
    <property type="entry name" value="Hemocyanin_C"/>
</dbReference>
<dbReference type="InterPro" id="IPR037020">
    <property type="entry name" value="Hemocyanin_C_sf"/>
</dbReference>
<dbReference type="InterPro" id="IPR005204">
    <property type="entry name" value="Hemocyanin_N"/>
</dbReference>
<dbReference type="InterPro" id="IPR036697">
    <property type="entry name" value="Hemocyanin_N_sf"/>
</dbReference>
<dbReference type="InterPro" id="IPR014756">
    <property type="entry name" value="Ig_E-set"/>
</dbReference>
<dbReference type="PANTHER" id="PTHR11511:SF5">
    <property type="entry name" value="FAT-BODY PROTEIN 1-RELATED"/>
    <property type="match status" value="1"/>
</dbReference>
<dbReference type="PANTHER" id="PTHR11511">
    <property type="entry name" value="LARVAL STORAGE PROTEIN/PHENOLOXIDASE"/>
    <property type="match status" value="1"/>
</dbReference>
<dbReference type="Pfam" id="PF03723">
    <property type="entry name" value="Hemocyanin_C"/>
    <property type="match status" value="1"/>
</dbReference>
<dbReference type="Pfam" id="PF00372">
    <property type="entry name" value="Hemocyanin_M"/>
    <property type="match status" value="1"/>
</dbReference>
<dbReference type="Pfam" id="PF03722">
    <property type="entry name" value="Hemocyanin_N"/>
    <property type="match status" value="1"/>
</dbReference>
<dbReference type="PRINTS" id="PR00187">
    <property type="entry name" value="HAEMOCYANIN"/>
</dbReference>
<dbReference type="SUPFAM" id="SSF48056">
    <property type="entry name" value="Di-copper centre-containing domain"/>
    <property type="match status" value="1"/>
</dbReference>
<dbReference type="SUPFAM" id="SSF81296">
    <property type="entry name" value="E set domains"/>
    <property type="match status" value="1"/>
</dbReference>
<dbReference type="SUPFAM" id="SSF48050">
    <property type="entry name" value="Hemocyanin, N-terminal domain"/>
    <property type="match status" value="1"/>
</dbReference>
<dbReference type="PROSITE" id="PS00209">
    <property type="entry name" value="HEMOCYANIN_1"/>
    <property type="match status" value="1"/>
</dbReference>
<dbReference type="PROSITE" id="PS00210">
    <property type="entry name" value="HEMOCYANIN_2"/>
    <property type="match status" value="1"/>
</dbReference>
<gene>
    <name type="primary">LOC113516268</name>
    <name evidence="5" type="synonym">Arylphorin</name>
</gene>
<protein>
    <recommendedName>
        <fullName evidence="5">Arylphorin</fullName>
    </recommendedName>
    <alternativeName>
        <fullName evidence="5">Lhp76</fullName>
    </alternativeName>
</protein>
<organism evidence="8">
    <name type="scientific">Galleria mellonella</name>
    <name type="common">Greater wax moth</name>
    <dbReference type="NCBI Taxonomy" id="7137"/>
    <lineage>
        <taxon>Eukaryota</taxon>
        <taxon>Metazoa</taxon>
        <taxon>Ecdysozoa</taxon>
        <taxon>Arthropoda</taxon>
        <taxon>Hexapoda</taxon>
        <taxon>Insecta</taxon>
        <taxon>Pterygota</taxon>
        <taxon>Neoptera</taxon>
        <taxon>Endopterygota</taxon>
        <taxon>Lepidoptera</taxon>
        <taxon>Glossata</taxon>
        <taxon>Ditrysia</taxon>
        <taxon>Pyraloidea</taxon>
        <taxon>Pyralidae</taxon>
        <taxon>Galleriinae</taxon>
        <taxon>Galleria</taxon>
    </lineage>
</organism>
<sequence>MQTVLFLAALVSLAAAGYPQYHYDVETRKLDPSLLNIQTKVLSLLENWKQVNPDDEYYKIGKEYNVEANMESYTNREVVTEFLSLYKAGFIPKNEVFSIFYENQALEVIALYRLFYYAKDFETFYKTAAFARVWLNEGQFVYAFYLAVIHRADTRGIVLPAPYEIWPEYFMNSDVLSKIYRIQMQKGLIIPEQGPYYGILSKDNAYYFYANYSGPLTYEDNENLLSYFIEDIGWNSYYYYFHNRFPFWENGEQLIGPLKERRGEIYYYVYQKILARYYLERLANGLGEIPRFNWLDKYQTSYYPLLSSYQLPFAQRNDDYYLASGDNINDIQFIDTYEKTFLQLLQKGQFKAYKQEVDLYNSKSINFVGNYWQSNADLYEKVPKRNYWRSYEATARRVLGAAPRSSINYENMNIPTALDFYQTSLRDPAFYQLYAKILDYINEYKEYLEPYSQDVLHYVGVKINDVKVDKLVTYFEYFDWNATNAVYLSEQQLDTVSPSYIVRQPRLNNKPFTVNIDIKSDVESEVVVKIFLGPKYDGNGLPISLEDNWINFIELDWFTHKLTSGQNKIARKSEEFFFFKDDSVSLFKIYELLSNGQVPSYMVDRYIYLPRRLILPRGTQRGFPLQLFVVVYPYQAPVKEWESMRQYIVDNKPFGYPFDRPVTLPYYFNQPNMYFKDVYVYQEGEQYPYYNSYWSQNQVSNH</sequence>
<evidence type="ECO:0000255" key="1"/>
<evidence type="ECO:0000255" key="2">
    <source>
        <dbReference type="PROSITE-ProRule" id="PRU00498"/>
    </source>
</evidence>
<evidence type="ECO:0000269" key="3">
    <source>
    </source>
</evidence>
<evidence type="ECO:0000269" key="4">
    <source ref="1"/>
</evidence>
<evidence type="ECO:0000303" key="5">
    <source ref="1"/>
</evidence>
<evidence type="ECO:0000305" key="6"/>
<evidence type="ECO:0000312" key="7">
    <source>
        <dbReference type="EMBL" id="AAA74229.1"/>
    </source>
</evidence>
<evidence type="ECO:0000312" key="8">
    <source>
        <dbReference type="Proteomes" id="UP000504614"/>
    </source>
</evidence>
<evidence type="ECO:0007829" key="9">
    <source>
        <dbReference type="PDB" id="8CA9"/>
    </source>
</evidence>
<evidence type="ECO:0007829" key="10">
    <source>
        <dbReference type="PDB" id="8PO9"/>
    </source>
</evidence>